<feature type="chain" id="PRO_0000167641" description="Flavodoxin/ferredoxin--NADP reductase">
    <location>
        <begin position="1"/>
        <end position="257"/>
    </location>
</feature>
<feature type="domain" description="FAD-binding FR-type" evidence="2">
    <location>
        <begin position="2"/>
        <end position="110"/>
    </location>
</feature>
<feature type="binding site" evidence="1">
    <location>
        <begin position="59"/>
        <end position="62"/>
    </location>
    <ligand>
        <name>FAD</name>
        <dbReference type="ChEBI" id="CHEBI:57692"/>
    </ligand>
</feature>
<feature type="binding site" evidence="1">
    <location>
        <position position="75"/>
    </location>
    <ligand>
        <name>FAD</name>
        <dbReference type="ChEBI" id="CHEBI:57692"/>
    </ligand>
</feature>
<feature type="binding site" evidence="1">
    <location>
        <begin position="83"/>
        <end position="85"/>
    </location>
    <ligand>
        <name>FAD</name>
        <dbReference type="ChEBI" id="CHEBI:57692"/>
    </ligand>
</feature>
<feature type="binding site" evidence="1">
    <location>
        <position position="125"/>
    </location>
    <ligand>
        <name>FAD</name>
        <dbReference type="ChEBI" id="CHEBI:57692"/>
    </ligand>
</feature>
<feature type="binding site" evidence="1">
    <location>
        <begin position="152"/>
        <end position="153"/>
    </location>
    <ligand>
        <name>NADP(+)</name>
        <dbReference type="ChEBI" id="CHEBI:58349"/>
    </ligand>
</feature>
<feature type="binding site" evidence="1">
    <location>
        <begin position="182"/>
        <end position="183"/>
    </location>
    <ligand>
        <name>NADP(+)</name>
        <dbReference type="ChEBI" id="CHEBI:58349"/>
    </ligand>
</feature>
<feature type="binding site" evidence="1">
    <location>
        <position position="193"/>
    </location>
    <ligand>
        <name>NADP(+)</name>
        <dbReference type="ChEBI" id="CHEBI:58349"/>
    </ligand>
</feature>
<feature type="binding site" evidence="1">
    <location>
        <begin position="223"/>
        <end position="225"/>
    </location>
    <ligand>
        <name>NADP(+)</name>
        <dbReference type="ChEBI" id="CHEBI:58349"/>
    </ligand>
</feature>
<feature type="binding site" evidence="1">
    <location>
        <position position="229"/>
    </location>
    <ligand>
        <name>NADP(+)</name>
        <dbReference type="ChEBI" id="CHEBI:58349"/>
    </ligand>
</feature>
<feature type="binding site" evidence="1">
    <location>
        <begin position="256"/>
        <end position="257"/>
    </location>
    <ligand>
        <name>FAD</name>
        <dbReference type="ChEBI" id="CHEBI:57692"/>
    </ligand>
</feature>
<proteinExistence type="inferred from homology"/>
<evidence type="ECO:0000250" key="1">
    <source>
        <dbReference type="UniProtKB" id="P28861"/>
    </source>
</evidence>
<evidence type="ECO:0000255" key="2">
    <source>
        <dbReference type="PROSITE-ProRule" id="PRU00716"/>
    </source>
</evidence>
<evidence type="ECO:0000305" key="3"/>
<protein>
    <recommendedName>
        <fullName evidence="1">Flavodoxin/ferredoxin--NADP reductase</fullName>
        <ecNumber evidence="1">1.18.1.2</ecNumber>
        <ecNumber evidence="1">1.19.1.1</ecNumber>
    </recommendedName>
    <alternativeName>
        <fullName evidence="1">Ferredoxin (flavodoxin):NADP(+) oxidoreductase</fullName>
    </alternativeName>
    <alternativeName>
        <fullName evidence="1">Ferredoxin--NADP reductase</fullName>
        <shortName evidence="1">FNR</shortName>
    </alternativeName>
    <alternativeName>
        <fullName evidence="1">Flavodoxin--NADP reductase</fullName>
        <shortName evidence="1">FLDR</shortName>
    </alternativeName>
</protein>
<dbReference type="EC" id="1.18.1.2" evidence="1"/>
<dbReference type="EC" id="1.19.1.1" evidence="1"/>
<dbReference type="EMBL" id="AF108665">
    <property type="protein sequence ID" value="AAD19635.1"/>
    <property type="molecule type" value="Genomic_DNA"/>
</dbReference>
<dbReference type="EMBL" id="AE013218">
    <property type="protein sequence ID" value="AAM68098.1"/>
    <property type="molecule type" value="Genomic_DNA"/>
</dbReference>
<dbReference type="RefSeq" id="WP_011054064.1">
    <property type="nucleotide sequence ID" value="NC_004061.1"/>
</dbReference>
<dbReference type="SMR" id="Q9Z615"/>
<dbReference type="STRING" id="198804.BUsg_560"/>
<dbReference type="GeneID" id="93004038"/>
<dbReference type="KEGG" id="bas:BUsg_560"/>
<dbReference type="eggNOG" id="COG1018">
    <property type="taxonomic scope" value="Bacteria"/>
</dbReference>
<dbReference type="HOGENOM" id="CLU_003827_3_0_6"/>
<dbReference type="Proteomes" id="UP000000416">
    <property type="component" value="Chromosome"/>
</dbReference>
<dbReference type="GO" id="GO:0005737">
    <property type="term" value="C:cytoplasm"/>
    <property type="evidence" value="ECO:0007669"/>
    <property type="project" value="UniProtKB-SubCell"/>
</dbReference>
<dbReference type="GO" id="GO:0004324">
    <property type="term" value="F:ferredoxin-NADP+ reductase activity"/>
    <property type="evidence" value="ECO:0007669"/>
    <property type="project" value="UniProtKB-EC"/>
</dbReference>
<dbReference type="GO" id="GO:0000166">
    <property type="term" value="F:nucleotide binding"/>
    <property type="evidence" value="ECO:0007669"/>
    <property type="project" value="UniProtKB-KW"/>
</dbReference>
<dbReference type="GO" id="GO:0034599">
    <property type="term" value="P:cellular response to oxidative stress"/>
    <property type="evidence" value="ECO:0007669"/>
    <property type="project" value="TreeGrafter"/>
</dbReference>
<dbReference type="GO" id="GO:0042167">
    <property type="term" value="P:heme catabolic process"/>
    <property type="evidence" value="ECO:0007669"/>
    <property type="project" value="TreeGrafter"/>
</dbReference>
<dbReference type="CDD" id="cd06195">
    <property type="entry name" value="FNR1"/>
    <property type="match status" value="1"/>
</dbReference>
<dbReference type="Gene3D" id="3.40.50.80">
    <property type="entry name" value="Nucleotide-binding domain of ferredoxin-NADP reductase (FNR) module"/>
    <property type="match status" value="1"/>
</dbReference>
<dbReference type="Gene3D" id="2.40.30.10">
    <property type="entry name" value="Translation factors"/>
    <property type="match status" value="1"/>
</dbReference>
<dbReference type="InterPro" id="IPR008333">
    <property type="entry name" value="Cbr1-like_FAD-bd_dom"/>
</dbReference>
<dbReference type="InterPro" id="IPR017927">
    <property type="entry name" value="FAD-bd_FR_type"/>
</dbReference>
<dbReference type="InterPro" id="IPR033892">
    <property type="entry name" value="FNR_bac"/>
</dbReference>
<dbReference type="InterPro" id="IPR039261">
    <property type="entry name" value="FNR_nucleotide-bd"/>
</dbReference>
<dbReference type="InterPro" id="IPR051930">
    <property type="entry name" value="FNR_type-1"/>
</dbReference>
<dbReference type="InterPro" id="IPR001433">
    <property type="entry name" value="OxRdtase_FAD/NAD-bd"/>
</dbReference>
<dbReference type="InterPro" id="IPR017938">
    <property type="entry name" value="Riboflavin_synthase-like_b-brl"/>
</dbReference>
<dbReference type="PANTHER" id="PTHR47878:SF1">
    <property type="entry name" value="FLAVODOXIN_FERREDOXIN--NADP REDUCTASE"/>
    <property type="match status" value="1"/>
</dbReference>
<dbReference type="PANTHER" id="PTHR47878">
    <property type="entry name" value="OXIDOREDUCTASE FAD/NAD(P)-BINDING DOMAIN PROTEIN"/>
    <property type="match status" value="1"/>
</dbReference>
<dbReference type="Pfam" id="PF00970">
    <property type="entry name" value="FAD_binding_6"/>
    <property type="match status" value="1"/>
</dbReference>
<dbReference type="Pfam" id="PF00175">
    <property type="entry name" value="NAD_binding_1"/>
    <property type="match status" value="1"/>
</dbReference>
<dbReference type="SUPFAM" id="SSF52343">
    <property type="entry name" value="Ferredoxin reductase-like, C-terminal NADP-linked domain"/>
    <property type="match status" value="1"/>
</dbReference>
<dbReference type="SUPFAM" id="SSF63380">
    <property type="entry name" value="Riboflavin synthase domain-like"/>
    <property type="match status" value="1"/>
</dbReference>
<dbReference type="PROSITE" id="PS51384">
    <property type="entry name" value="FAD_FR"/>
    <property type="match status" value="1"/>
</dbReference>
<reference key="1">
    <citation type="submission" date="1998-11" db="EMBL/GenBank/DDBJ databases">
        <title>Buchnera plasmid-associated trpEG probably originated from a chromosomal location between hslU and fpr.</title>
        <authorList>
            <person name="Clark M.A."/>
            <person name="Baumann P."/>
            <person name="Moran M.A."/>
        </authorList>
    </citation>
    <scope>NUCLEOTIDE SEQUENCE [GENOMIC DNA]</scope>
</reference>
<reference key="2">
    <citation type="journal article" date="2002" name="Science">
        <title>50 million years of genomic stasis in endosymbiotic bacteria.</title>
        <authorList>
            <person name="Tamas I."/>
            <person name="Klasson L."/>
            <person name="Canbaeck B."/>
            <person name="Naeslund A.K."/>
            <person name="Eriksson A.-S."/>
            <person name="Wernegreen J.J."/>
            <person name="Sandstroem J.P."/>
            <person name="Moran N.A."/>
            <person name="Andersson S.G.E."/>
        </authorList>
    </citation>
    <scope>NUCLEOTIDE SEQUENCE [LARGE SCALE GENOMIC DNA]</scope>
    <source>
        <strain>Sg</strain>
    </source>
</reference>
<gene>
    <name type="primary">fpr</name>
    <name type="ordered locus">BUsg_560</name>
</gene>
<keyword id="KW-0963">Cytoplasm</keyword>
<keyword id="KW-0274">FAD</keyword>
<keyword id="KW-0285">Flavoprotein</keyword>
<keyword id="KW-0521">NADP</keyword>
<keyword id="KW-0547">Nucleotide-binding</keyword>
<keyword id="KW-0560">Oxidoreductase</keyword>
<organism>
    <name type="scientific">Buchnera aphidicola subsp. Schizaphis graminum (strain Sg)</name>
    <dbReference type="NCBI Taxonomy" id="198804"/>
    <lineage>
        <taxon>Bacteria</taxon>
        <taxon>Pseudomonadati</taxon>
        <taxon>Pseudomonadota</taxon>
        <taxon>Gammaproteobacteria</taxon>
        <taxon>Enterobacterales</taxon>
        <taxon>Erwiniaceae</taxon>
        <taxon>Buchnera</taxon>
    </lineage>
</organism>
<comment type="function">
    <text evidence="1">Transports electrons between flavodoxin or ferredoxin and NADPH.</text>
</comment>
<comment type="catalytic activity">
    <reaction evidence="1">
        <text>2 reduced [2Fe-2S]-[ferredoxin] + NADP(+) + H(+) = 2 oxidized [2Fe-2S]-[ferredoxin] + NADPH</text>
        <dbReference type="Rhea" id="RHEA:20125"/>
        <dbReference type="Rhea" id="RHEA-COMP:10000"/>
        <dbReference type="Rhea" id="RHEA-COMP:10001"/>
        <dbReference type="ChEBI" id="CHEBI:15378"/>
        <dbReference type="ChEBI" id="CHEBI:33737"/>
        <dbReference type="ChEBI" id="CHEBI:33738"/>
        <dbReference type="ChEBI" id="CHEBI:57783"/>
        <dbReference type="ChEBI" id="CHEBI:58349"/>
        <dbReference type="EC" id="1.18.1.2"/>
    </reaction>
</comment>
<comment type="catalytic activity">
    <reaction evidence="1">
        <text>reduced [flavodoxin] + NADP(+) = oxidized [flavodoxin] + NADPH + 2 H(+)</text>
        <dbReference type="Rhea" id="RHEA:50756"/>
        <dbReference type="Rhea" id="RHEA-COMP:10622"/>
        <dbReference type="Rhea" id="RHEA-COMP:10623"/>
        <dbReference type="ChEBI" id="CHEBI:15378"/>
        <dbReference type="ChEBI" id="CHEBI:57618"/>
        <dbReference type="ChEBI" id="CHEBI:57783"/>
        <dbReference type="ChEBI" id="CHEBI:58210"/>
        <dbReference type="ChEBI" id="CHEBI:58349"/>
        <dbReference type="EC" id="1.19.1.1"/>
    </reaction>
</comment>
<comment type="cofactor">
    <cofactor evidence="1">
        <name>FAD</name>
        <dbReference type="ChEBI" id="CHEBI:57692"/>
    </cofactor>
</comment>
<comment type="subcellular location">
    <subcellularLocation>
        <location evidence="1">Cytoplasm</location>
    </subcellularLocation>
</comment>
<comment type="similarity">
    <text evidence="3">Belongs to the ferredoxin--NADP reductase type 1 family.</text>
</comment>
<sequence>MNPWINANVLKVHKWTQNLFSLILNAEIAPFQAGQFTKLALNEENINFSNNVKKKKIQRAYSFVNAPSNKNLEIYIVRILNGKLSNLLYNLKSGDNLFIKEKSFGFFTLDEIPNCKTLWMFATGTGIGPYCSILQEYKNINRFKNIILIHAVRYQNELTYLPLMKQLYKSYNGKLKIETIVSREKNHNSLYGRIPLLLQNQILEKKIGLKINRNDSHVMLCGNPAMVKDTYLFLQKDRCMQKNLRRKHGHITMENYW</sequence>
<accession>Q9Z615</accession>
<name>FENR_BUCAP</name>